<keyword id="KW-0997">Cell inner membrane</keyword>
<keyword id="KW-1003">Cell membrane</keyword>
<keyword id="KW-0472">Membrane</keyword>
<keyword id="KW-1185">Reference proteome</keyword>
<keyword id="KW-0812">Transmembrane</keyword>
<keyword id="KW-1133">Transmembrane helix</keyword>
<organism>
    <name type="scientific">Rhizobium etli (strain ATCC 51251 / DSM 11541 / JCM 21823 / NBRC 15573 / CFN 42)</name>
    <dbReference type="NCBI Taxonomy" id="347834"/>
    <lineage>
        <taxon>Bacteria</taxon>
        <taxon>Pseudomonadati</taxon>
        <taxon>Pseudomonadota</taxon>
        <taxon>Alphaproteobacteria</taxon>
        <taxon>Hyphomicrobiales</taxon>
        <taxon>Rhizobiaceae</taxon>
        <taxon>Rhizobium/Agrobacterium group</taxon>
        <taxon>Rhizobium</taxon>
    </lineage>
</organism>
<sequence>MSKPPSDLPRRPPAAFAYEDEAAEPGDNGRQQQGRRRPESFSEDIVLTPDEEDPFINPDRDPSAVAVATPRKRRTSFGKIALAAFGILLSLGIGLWTDRLIRDLFSRADWLGYAALGVLAIGILAVLALVIREAAGMMRLAAVQTIKAEAEAAILETRPAKARAVVSRLTTLLAANPETSKGRATLKATEGEVIDPPHLIALAERELLAPLDRKARALIVNASKRVSIVTAVSPRAIVDLLYVLYESVRLIRAMAELYGGRPGTLGMFRLLRDVLAHLAVTGSIAVGDSLVQQVLGHGLASKLSARLGEGVINGLMTARIGIAAMDLCRPLAFRAVKRPGIGDFIGDLTPSMSPRGNNP</sequence>
<reference key="1">
    <citation type="journal article" date="2006" name="Proc. Natl. Acad. Sci. U.S.A.">
        <title>The partitioned Rhizobium etli genome: genetic and metabolic redundancy in seven interacting replicons.</title>
        <authorList>
            <person name="Gonzalez V."/>
            <person name="Santamaria R.I."/>
            <person name="Bustos P."/>
            <person name="Hernandez-Gonzalez I."/>
            <person name="Medrano-Soto A."/>
            <person name="Moreno-Hagelsieb G."/>
            <person name="Janga S.C."/>
            <person name="Ramirez M.A."/>
            <person name="Jimenez-Jacinto V."/>
            <person name="Collado-Vides J."/>
            <person name="Davila G."/>
        </authorList>
    </citation>
    <scope>NUCLEOTIDE SEQUENCE [LARGE SCALE GENOMIC DNA]</scope>
    <source>
        <strain>ATCC 51251 / DSM 11541 / JCM 21823 / NBRC 15573 / CFN 42</strain>
    </source>
</reference>
<name>Y2332_RHIEC</name>
<dbReference type="EMBL" id="CP000133">
    <property type="protein sequence ID" value="ABC91112.1"/>
    <property type="molecule type" value="Genomic_DNA"/>
</dbReference>
<dbReference type="RefSeq" id="WP_011425592.1">
    <property type="nucleotide sequence ID" value="NC_007761.1"/>
</dbReference>
<dbReference type="KEGG" id="ret:RHE_CH02332"/>
<dbReference type="eggNOG" id="COG3768">
    <property type="taxonomic scope" value="Bacteria"/>
</dbReference>
<dbReference type="HOGENOM" id="CLU_057693_1_0_5"/>
<dbReference type="OrthoDB" id="9816060at2"/>
<dbReference type="Proteomes" id="UP000001936">
    <property type="component" value="Chromosome"/>
</dbReference>
<dbReference type="GO" id="GO:0005886">
    <property type="term" value="C:plasma membrane"/>
    <property type="evidence" value="ECO:0007669"/>
    <property type="project" value="UniProtKB-SubCell"/>
</dbReference>
<dbReference type="HAMAP" id="MF_01085">
    <property type="entry name" value="UPF0283"/>
    <property type="match status" value="1"/>
</dbReference>
<dbReference type="InterPro" id="IPR021147">
    <property type="entry name" value="DUF697"/>
</dbReference>
<dbReference type="InterPro" id="IPR006507">
    <property type="entry name" value="UPF0283"/>
</dbReference>
<dbReference type="NCBIfam" id="TIGR01620">
    <property type="entry name" value="hyp_HI0043"/>
    <property type="match status" value="1"/>
</dbReference>
<dbReference type="PANTHER" id="PTHR39342">
    <property type="entry name" value="UPF0283 MEMBRANE PROTEIN YCJF"/>
    <property type="match status" value="1"/>
</dbReference>
<dbReference type="PANTHER" id="PTHR39342:SF1">
    <property type="entry name" value="UPF0283 MEMBRANE PROTEIN YCJF"/>
    <property type="match status" value="1"/>
</dbReference>
<dbReference type="Pfam" id="PF05128">
    <property type="entry name" value="DUF697"/>
    <property type="match status" value="1"/>
</dbReference>
<feature type="chain" id="PRO_1000149863" description="UPF0283 membrane protein RHE_CH02332">
    <location>
        <begin position="1"/>
        <end position="359"/>
    </location>
</feature>
<feature type="transmembrane region" description="Helical" evidence="1">
    <location>
        <begin position="77"/>
        <end position="97"/>
    </location>
</feature>
<feature type="transmembrane region" description="Helical" evidence="1">
    <location>
        <begin position="111"/>
        <end position="131"/>
    </location>
</feature>
<feature type="region of interest" description="Disordered" evidence="2">
    <location>
        <begin position="1"/>
        <end position="61"/>
    </location>
</feature>
<accession>Q2K7S4</accession>
<evidence type="ECO:0000255" key="1">
    <source>
        <dbReference type="HAMAP-Rule" id="MF_01085"/>
    </source>
</evidence>
<evidence type="ECO:0000256" key="2">
    <source>
        <dbReference type="SAM" id="MobiDB-lite"/>
    </source>
</evidence>
<protein>
    <recommendedName>
        <fullName evidence="1">UPF0283 membrane protein RHE_CH02332</fullName>
    </recommendedName>
</protein>
<proteinExistence type="inferred from homology"/>
<comment type="subcellular location">
    <subcellularLocation>
        <location evidence="1">Cell inner membrane</location>
        <topology evidence="1">Multi-pass membrane protein</topology>
    </subcellularLocation>
</comment>
<comment type="similarity">
    <text evidence="1">Belongs to the UPF0283 family.</text>
</comment>
<gene>
    <name type="ordered locus">RHE_CH02332</name>
</gene>